<name>SLAE_MACLB</name>
<dbReference type="EMBL" id="EU085451">
    <property type="protein sequence ID" value="ABW82661.1"/>
    <property type="molecule type" value="mRNA"/>
</dbReference>
<dbReference type="SMR" id="B4XSY9"/>
<dbReference type="GO" id="GO:0005576">
    <property type="term" value="C:extracellular region"/>
    <property type="evidence" value="ECO:0007669"/>
    <property type="project" value="UniProtKB-SubCell"/>
</dbReference>
<dbReference type="GO" id="GO:0090729">
    <property type="term" value="F:toxin activity"/>
    <property type="evidence" value="ECO:0007669"/>
    <property type="project" value="UniProtKB-KW"/>
</dbReference>
<dbReference type="FunFam" id="3.10.100.10:FF:000087">
    <property type="entry name" value="Snaclec rhodocetin subunit delta"/>
    <property type="match status" value="1"/>
</dbReference>
<dbReference type="Gene3D" id="3.10.100.10">
    <property type="entry name" value="Mannose-Binding Protein A, subunit A"/>
    <property type="match status" value="1"/>
</dbReference>
<dbReference type="InterPro" id="IPR001304">
    <property type="entry name" value="C-type_lectin-like"/>
</dbReference>
<dbReference type="InterPro" id="IPR016186">
    <property type="entry name" value="C-type_lectin-like/link_sf"/>
</dbReference>
<dbReference type="InterPro" id="IPR050111">
    <property type="entry name" value="C-type_lectin/snaclec_domain"/>
</dbReference>
<dbReference type="InterPro" id="IPR018378">
    <property type="entry name" value="C-type_lectin_CS"/>
</dbReference>
<dbReference type="InterPro" id="IPR016187">
    <property type="entry name" value="CTDL_fold"/>
</dbReference>
<dbReference type="PANTHER" id="PTHR22803">
    <property type="entry name" value="MANNOSE, PHOSPHOLIPASE, LECTIN RECEPTOR RELATED"/>
    <property type="match status" value="1"/>
</dbReference>
<dbReference type="Pfam" id="PF00059">
    <property type="entry name" value="Lectin_C"/>
    <property type="match status" value="1"/>
</dbReference>
<dbReference type="PRINTS" id="PR01504">
    <property type="entry name" value="PNCREATITSAP"/>
</dbReference>
<dbReference type="SMART" id="SM00034">
    <property type="entry name" value="CLECT"/>
    <property type="match status" value="1"/>
</dbReference>
<dbReference type="SUPFAM" id="SSF56436">
    <property type="entry name" value="C-type lectin-like"/>
    <property type="match status" value="1"/>
</dbReference>
<dbReference type="PROSITE" id="PS00615">
    <property type="entry name" value="C_TYPE_LECTIN_1"/>
    <property type="match status" value="1"/>
</dbReference>
<dbReference type="PROSITE" id="PS50041">
    <property type="entry name" value="C_TYPE_LECTIN_2"/>
    <property type="match status" value="1"/>
</dbReference>
<comment type="function">
    <text evidence="1">Interferes with one step of hemostasis (modulation of platelet aggregation, or coagulation cascade, for example).</text>
</comment>
<comment type="subunit">
    <text evidence="1">Heterodimer; disulfide-linked.</text>
</comment>
<comment type="subcellular location">
    <subcellularLocation>
        <location evidence="1">Secreted</location>
    </subcellularLocation>
</comment>
<comment type="tissue specificity">
    <text>Expressed by the venom gland.</text>
</comment>
<comment type="miscellaneous">
    <text>Shows greater sequence similarity to the alpha than beta subunits compared to other heterodimer snaclecs.</text>
</comment>
<comment type="similarity">
    <text evidence="4">Belongs to the snaclec family.</text>
</comment>
<evidence type="ECO:0000250" key="1"/>
<evidence type="ECO:0000255" key="2"/>
<evidence type="ECO:0000255" key="3">
    <source>
        <dbReference type="PROSITE-ProRule" id="PRU00040"/>
    </source>
</evidence>
<evidence type="ECO:0000305" key="4"/>
<protein>
    <recommendedName>
        <fullName>Snaclec A14</fullName>
    </recommendedName>
    <alternativeName>
        <fullName>C-type lectin A14</fullName>
    </alternativeName>
</protein>
<reference key="1">
    <citation type="journal article" date="2009" name="Toxicon">
        <title>C-type lectin protein isoforms of Macrovipera lebetina: cDNA cloning and genetic diversity.</title>
        <authorList>
            <person name="Jebali J."/>
            <person name="Bazaa A."/>
            <person name="Sarray S."/>
            <person name="Benhaj K."/>
            <person name="Karboul A."/>
            <person name="El Ayeb M."/>
            <person name="Marrakchi N."/>
            <person name="Gargouri A."/>
        </authorList>
    </citation>
    <scope>NUCLEOTIDE SEQUENCE [MRNA]</scope>
</reference>
<sequence>MGRFIFVRVGLLVVFLSLSGTGADFDCPPDWSAYDQHCYKAFDEPKRSGDAEKFCTQQANGGHLVSIESVEEAEFVAQLISENIKTSADYVWIGLWNQRKAPYCVSKWTDGSSVIYKNVIERFIKNCFGLEKETNYRTWFNLSCGDDYPFVCKSPA</sequence>
<keyword id="KW-1015">Disulfide bond</keyword>
<keyword id="KW-0325">Glycoprotein</keyword>
<keyword id="KW-1199">Hemostasis impairing toxin</keyword>
<keyword id="KW-0964">Secreted</keyword>
<keyword id="KW-0732">Signal</keyword>
<keyword id="KW-0800">Toxin</keyword>
<feature type="signal peptide" evidence="1">
    <location>
        <begin position="1"/>
        <end position="23"/>
    </location>
</feature>
<feature type="chain" id="PRO_0000356330" description="Snaclec A14">
    <location>
        <begin position="24"/>
        <end position="156"/>
    </location>
</feature>
<feature type="domain" description="C-type lectin" evidence="3">
    <location>
        <begin position="34"/>
        <end position="153"/>
    </location>
</feature>
<feature type="glycosylation site" description="N-linked (GlcNAc...) asparagine" evidence="2">
    <location>
        <position position="141"/>
    </location>
</feature>
<feature type="disulfide bond" evidence="3">
    <location>
        <begin position="27"/>
        <end position="38"/>
    </location>
</feature>
<feature type="disulfide bond" evidence="3">
    <location>
        <begin position="55"/>
        <end position="152"/>
    </location>
</feature>
<feature type="disulfide bond" description="Interchain" evidence="3">
    <location>
        <position position="104"/>
    </location>
</feature>
<feature type="disulfide bond" evidence="3">
    <location>
        <begin position="127"/>
        <end position="144"/>
    </location>
</feature>
<accession>B4XSY9</accession>
<proteinExistence type="evidence at transcript level"/>
<organism>
    <name type="scientific">Macrovipera lebetinus</name>
    <name type="common">Levantine viper</name>
    <name type="synonym">Vipera lebetina</name>
    <dbReference type="NCBI Taxonomy" id="3148341"/>
    <lineage>
        <taxon>Eukaryota</taxon>
        <taxon>Metazoa</taxon>
        <taxon>Chordata</taxon>
        <taxon>Craniata</taxon>
        <taxon>Vertebrata</taxon>
        <taxon>Euteleostomi</taxon>
        <taxon>Lepidosauria</taxon>
        <taxon>Squamata</taxon>
        <taxon>Bifurcata</taxon>
        <taxon>Unidentata</taxon>
        <taxon>Episquamata</taxon>
        <taxon>Toxicofera</taxon>
        <taxon>Serpentes</taxon>
        <taxon>Colubroidea</taxon>
        <taxon>Viperidae</taxon>
        <taxon>Viperinae</taxon>
        <taxon>Macrovipera</taxon>
    </lineage>
</organism>